<evidence type="ECO:0000255" key="1">
    <source>
        <dbReference type="HAMAP-Rule" id="MF_01568"/>
    </source>
</evidence>
<comment type="function">
    <text evidence="1">Has nucleoside phosphatase activity towards nucleoside triphosphates and nucleoside diphosphates.</text>
</comment>
<comment type="catalytic activity">
    <reaction evidence="1">
        <text>a ribonucleoside 5'-triphosphate + H2O = a ribonucleoside 5'-diphosphate + phosphate + H(+)</text>
        <dbReference type="Rhea" id="RHEA:23680"/>
        <dbReference type="ChEBI" id="CHEBI:15377"/>
        <dbReference type="ChEBI" id="CHEBI:15378"/>
        <dbReference type="ChEBI" id="CHEBI:43474"/>
        <dbReference type="ChEBI" id="CHEBI:57930"/>
        <dbReference type="ChEBI" id="CHEBI:61557"/>
        <dbReference type="EC" id="3.6.1.15"/>
    </reaction>
</comment>
<comment type="catalytic activity">
    <reaction evidence="1">
        <text>a ribonucleoside 5'-diphosphate + H2O = a ribonucleoside 5'-phosphate + phosphate + H(+)</text>
        <dbReference type="Rhea" id="RHEA:36799"/>
        <dbReference type="ChEBI" id="CHEBI:15377"/>
        <dbReference type="ChEBI" id="CHEBI:15378"/>
        <dbReference type="ChEBI" id="CHEBI:43474"/>
        <dbReference type="ChEBI" id="CHEBI:57930"/>
        <dbReference type="ChEBI" id="CHEBI:58043"/>
        <dbReference type="EC" id="3.6.1.6"/>
    </reaction>
</comment>
<comment type="cofactor">
    <cofactor evidence="1">
        <name>Mg(2+)</name>
        <dbReference type="ChEBI" id="CHEBI:18420"/>
    </cofactor>
</comment>
<comment type="similarity">
    <text evidence="1">Belongs to the Ntdp family.</text>
</comment>
<protein>
    <recommendedName>
        <fullName evidence="1">Nucleoside triphosphate/diphosphate phosphatase</fullName>
        <ecNumber evidence="1">3.6.1.15</ecNumber>
        <ecNumber evidence="1">3.6.1.6</ecNumber>
    </recommendedName>
</protein>
<sequence>MGYPKEGETIQIHSYKHNGLLHRIWNETTILKSTELCIIGANDRTMVTESDGRTWVTREPAICYFHARQWFNVIGMLRDDGVHYYCNISSPFAYDGEAIKYIDYDLDVKVFPDMTYNILDEDEYDDHRKSMNYPKEIDSILKEYLNTLLHWIHQRKGPFAPEFVDMWYERYLRYTK</sequence>
<dbReference type="EC" id="3.6.1.15" evidence="1"/>
<dbReference type="EC" id="3.6.1.6" evidence="1"/>
<dbReference type="EMBL" id="CP000560">
    <property type="protein sequence ID" value="ABS73261.1"/>
    <property type="molecule type" value="Genomic_DNA"/>
</dbReference>
<dbReference type="RefSeq" id="WP_003155475.1">
    <property type="nucleotide sequence ID" value="NC_009725.2"/>
</dbReference>
<dbReference type="SMR" id="A7Z2N5"/>
<dbReference type="GeneID" id="93080010"/>
<dbReference type="KEGG" id="bay:RBAM_008770"/>
<dbReference type="HOGENOM" id="CLU_109787_1_0_9"/>
<dbReference type="Proteomes" id="UP000001120">
    <property type="component" value="Chromosome"/>
</dbReference>
<dbReference type="GO" id="GO:0000287">
    <property type="term" value="F:magnesium ion binding"/>
    <property type="evidence" value="ECO:0007669"/>
    <property type="project" value="UniProtKB-UniRule"/>
</dbReference>
<dbReference type="GO" id="GO:0017110">
    <property type="term" value="F:nucleoside diphosphate phosphatase activity"/>
    <property type="evidence" value="ECO:0007669"/>
    <property type="project" value="UniProtKB-UniRule"/>
</dbReference>
<dbReference type="GO" id="GO:0017111">
    <property type="term" value="F:ribonucleoside triphosphate phosphatase activity"/>
    <property type="evidence" value="ECO:0007669"/>
    <property type="project" value="UniProtKB-UniRule"/>
</dbReference>
<dbReference type="Gene3D" id="2.40.380.10">
    <property type="entry name" value="FomD-like"/>
    <property type="match status" value="1"/>
</dbReference>
<dbReference type="HAMAP" id="MF_01568">
    <property type="entry name" value="Ntdp"/>
    <property type="match status" value="1"/>
</dbReference>
<dbReference type="InterPro" id="IPR007295">
    <property type="entry name" value="DUF402"/>
</dbReference>
<dbReference type="InterPro" id="IPR035930">
    <property type="entry name" value="FomD-like_sf"/>
</dbReference>
<dbReference type="InterPro" id="IPR050212">
    <property type="entry name" value="Ntdp-like"/>
</dbReference>
<dbReference type="InterPro" id="IPR016882">
    <property type="entry name" value="SA1684"/>
</dbReference>
<dbReference type="NCBIfam" id="NF010183">
    <property type="entry name" value="PRK13662.1"/>
    <property type="match status" value="1"/>
</dbReference>
<dbReference type="PANTHER" id="PTHR39159">
    <property type="match status" value="1"/>
</dbReference>
<dbReference type="PANTHER" id="PTHR39159:SF1">
    <property type="entry name" value="UPF0374 PROTEIN YGAC"/>
    <property type="match status" value="1"/>
</dbReference>
<dbReference type="Pfam" id="PF04167">
    <property type="entry name" value="DUF402"/>
    <property type="match status" value="1"/>
</dbReference>
<dbReference type="PIRSF" id="PIRSF028345">
    <property type="entry name" value="UCP028345"/>
    <property type="match status" value="1"/>
</dbReference>
<dbReference type="SUPFAM" id="SSF159234">
    <property type="entry name" value="FomD-like"/>
    <property type="match status" value="1"/>
</dbReference>
<feature type="chain" id="PRO_1000069101" description="Nucleoside triphosphate/diphosphate phosphatase">
    <location>
        <begin position="1"/>
        <end position="176"/>
    </location>
</feature>
<feature type="active site" description="Proton donor" evidence="1">
    <location>
        <position position="23"/>
    </location>
</feature>
<feature type="binding site" evidence="1">
    <location>
        <position position="87"/>
    </location>
    <ligand>
        <name>Mg(2+)</name>
        <dbReference type="ChEBI" id="CHEBI:18420"/>
        <label>1</label>
    </ligand>
</feature>
<feature type="binding site" evidence="1">
    <location>
        <position position="103"/>
    </location>
    <ligand>
        <name>Mg(2+)</name>
        <dbReference type="ChEBI" id="CHEBI:18420"/>
        <label>1</label>
    </ligand>
</feature>
<feature type="binding site" evidence="1">
    <location>
        <position position="105"/>
    </location>
    <ligand>
        <name>Mg(2+)</name>
        <dbReference type="ChEBI" id="CHEBI:18420"/>
        <label>2</label>
    </ligand>
</feature>
<feature type="binding site" evidence="1">
    <location>
        <position position="107"/>
    </location>
    <ligand>
        <name>Mg(2+)</name>
        <dbReference type="ChEBI" id="CHEBI:18420"/>
        <label>1</label>
    </ligand>
</feature>
<feature type="binding site" evidence="1">
    <location>
        <position position="107"/>
    </location>
    <ligand>
        <name>Mg(2+)</name>
        <dbReference type="ChEBI" id="CHEBI:18420"/>
        <label>2</label>
    </ligand>
</feature>
<feature type="binding site" evidence="1">
    <location>
        <position position="120"/>
    </location>
    <ligand>
        <name>Mg(2+)</name>
        <dbReference type="ChEBI" id="CHEBI:18420"/>
        <label>2</label>
    </ligand>
</feature>
<feature type="binding site" evidence="1">
    <location>
        <position position="123"/>
    </location>
    <ligand>
        <name>Mg(2+)</name>
        <dbReference type="ChEBI" id="CHEBI:18420"/>
        <label>2</label>
    </ligand>
</feature>
<keyword id="KW-0378">Hydrolase</keyword>
<keyword id="KW-0460">Magnesium</keyword>
<keyword id="KW-0479">Metal-binding</keyword>
<name>NTDP_BACVZ</name>
<organism>
    <name type="scientific">Bacillus velezensis (strain DSM 23117 / BGSC 10A6 / LMG 26770 / FZB42)</name>
    <name type="common">Bacillus amyloliquefaciens subsp. plantarum</name>
    <dbReference type="NCBI Taxonomy" id="326423"/>
    <lineage>
        <taxon>Bacteria</taxon>
        <taxon>Bacillati</taxon>
        <taxon>Bacillota</taxon>
        <taxon>Bacilli</taxon>
        <taxon>Bacillales</taxon>
        <taxon>Bacillaceae</taxon>
        <taxon>Bacillus</taxon>
        <taxon>Bacillus amyloliquefaciens group</taxon>
    </lineage>
</organism>
<reference key="1">
    <citation type="journal article" date="2007" name="Nat. Biotechnol.">
        <title>Comparative analysis of the complete genome sequence of the plant growth-promoting bacterium Bacillus amyloliquefaciens FZB42.</title>
        <authorList>
            <person name="Chen X.H."/>
            <person name="Koumoutsi A."/>
            <person name="Scholz R."/>
            <person name="Eisenreich A."/>
            <person name="Schneider K."/>
            <person name="Heinemeyer I."/>
            <person name="Morgenstern B."/>
            <person name="Voss B."/>
            <person name="Hess W.R."/>
            <person name="Reva O."/>
            <person name="Junge H."/>
            <person name="Voigt B."/>
            <person name="Jungblut P.R."/>
            <person name="Vater J."/>
            <person name="Suessmuth R."/>
            <person name="Liesegang H."/>
            <person name="Strittmatter A."/>
            <person name="Gottschalk G."/>
            <person name="Borriss R."/>
        </authorList>
    </citation>
    <scope>NUCLEOTIDE SEQUENCE [LARGE SCALE GENOMIC DNA]</scope>
    <source>
        <strain>DSM 23117 / BGSC 10A6 / LMG 26770 / FZB42</strain>
    </source>
</reference>
<proteinExistence type="inferred from homology"/>
<gene>
    <name type="ordered locus">RBAM_008770</name>
</gene>
<accession>A7Z2N5</accession>